<keyword id="KW-0030">Aminoacyl-tRNA synthetase</keyword>
<keyword id="KW-0067">ATP-binding</keyword>
<keyword id="KW-0963">Cytoplasm</keyword>
<keyword id="KW-0436">Ligase</keyword>
<keyword id="KW-0479">Metal-binding</keyword>
<keyword id="KW-0547">Nucleotide-binding</keyword>
<keyword id="KW-0648">Protein biosynthesis</keyword>
<keyword id="KW-0862">Zinc</keyword>
<comment type="catalytic activity">
    <reaction evidence="1">
        <text>tRNA(Cys) + L-cysteine + ATP = L-cysteinyl-tRNA(Cys) + AMP + diphosphate</text>
        <dbReference type="Rhea" id="RHEA:17773"/>
        <dbReference type="Rhea" id="RHEA-COMP:9661"/>
        <dbReference type="Rhea" id="RHEA-COMP:9679"/>
        <dbReference type="ChEBI" id="CHEBI:30616"/>
        <dbReference type="ChEBI" id="CHEBI:33019"/>
        <dbReference type="ChEBI" id="CHEBI:35235"/>
        <dbReference type="ChEBI" id="CHEBI:78442"/>
        <dbReference type="ChEBI" id="CHEBI:78517"/>
        <dbReference type="ChEBI" id="CHEBI:456215"/>
        <dbReference type="EC" id="6.1.1.16"/>
    </reaction>
</comment>
<comment type="cofactor">
    <cofactor evidence="1">
        <name>Zn(2+)</name>
        <dbReference type="ChEBI" id="CHEBI:29105"/>
    </cofactor>
    <text evidence="1">Binds 1 zinc ion per subunit.</text>
</comment>
<comment type="subunit">
    <text evidence="1">Monomer.</text>
</comment>
<comment type="subcellular location">
    <subcellularLocation>
        <location evidence="1">Cytoplasm</location>
    </subcellularLocation>
</comment>
<comment type="similarity">
    <text evidence="1">Belongs to the class-I aminoacyl-tRNA synthetase family.</text>
</comment>
<gene>
    <name evidence="1" type="primary">cysS</name>
    <name type="ordered locus">FTM_0266</name>
</gene>
<accession>B2SFH9</accession>
<evidence type="ECO:0000255" key="1">
    <source>
        <dbReference type="HAMAP-Rule" id="MF_00041"/>
    </source>
</evidence>
<name>SYC_FRATM</name>
<organism>
    <name type="scientific">Francisella tularensis subsp. mediasiatica (strain FSC147)</name>
    <dbReference type="NCBI Taxonomy" id="441952"/>
    <lineage>
        <taxon>Bacteria</taxon>
        <taxon>Pseudomonadati</taxon>
        <taxon>Pseudomonadota</taxon>
        <taxon>Gammaproteobacteria</taxon>
        <taxon>Thiotrichales</taxon>
        <taxon>Francisellaceae</taxon>
        <taxon>Francisella</taxon>
    </lineage>
</organism>
<protein>
    <recommendedName>
        <fullName evidence="1">Cysteine--tRNA ligase</fullName>
        <ecNumber evidence="1">6.1.1.16</ecNumber>
    </recommendedName>
    <alternativeName>
        <fullName evidence="1">Cysteinyl-tRNA synthetase</fullName>
        <shortName evidence="1">CysRS</shortName>
    </alternativeName>
</protein>
<proteinExistence type="inferred from homology"/>
<feature type="chain" id="PRO_1000090839" description="Cysteine--tRNA ligase">
    <location>
        <begin position="1"/>
        <end position="459"/>
    </location>
</feature>
<feature type="short sequence motif" description="'HIGH' region">
    <location>
        <begin position="29"/>
        <end position="39"/>
    </location>
</feature>
<feature type="short sequence motif" description="'KMSKS' region">
    <location>
        <begin position="265"/>
        <end position="269"/>
    </location>
</feature>
<feature type="binding site" evidence="1">
    <location>
        <position position="27"/>
    </location>
    <ligand>
        <name>Zn(2+)</name>
        <dbReference type="ChEBI" id="CHEBI:29105"/>
    </ligand>
</feature>
<feature type="binding site" evidence="1">
    <location>
        <position position="208"/>
    </location>
    <ligand>
        <name>Zn(2+)</name>
        <dbReference type="ChEBI" id="CHEBI:29105"/>
    </ligand>
</feature>
<feature type="binding site" evidence="1">
    <location>
        <position position="233"/>
    </location>
    <ligand>
        <name>Zn(2+)</name>
        <dbReference type="ChEBI" id="CHEBI:29105"/>
    </ligand>
</feature>
<feature type="binding site" evidence="1">
    <location>
        <position position="237"/>
    </location>
    <ligand>
        <name>Zn(2+)</name>
        <dbReference type="ChEBI" id="CHEBI:29105"/>
    </ligand>
</feature>
<feature type="binding site" evidence="1">
    <location>
        <position position="268"/>
    </location>
    <ligand>
        <name>ATP</name>
        <dbReference type="ChEBI" id="CHEBI:30616"/>
    </ligand>
</feature>
<reference key="1">
    <citation type="journal article" date="2009" name="PLoS Pathog.">
        <title>Molecular evolutionary consequences of niche restriction in Francisella tularensis, a facultative intracellular pathogen.</title>
        <authorList>
            <person name="Larsson P."/>
            <person name="Elfsmark D."/>
            <person name="Svensson K."/>
            <person name="Wikstroem P."/>
            <person name="Forsman M."/>
            <person name="Brettin T."/>
            <person name="Keim P."/>
            <person name="Johansson A."/>
        </authorList>
    </citation>
    <scope>NUCLEOTIDE SEQUENCE [LARGE SCALE GENOMIC DNA]</scope>
    <source>
        <strain>FSC147</strain>
    </source>
</reference>
<sequence>MIFYNSLSGQKEQFKPIEANKIKMYACGVTVYDDCHIGHARTYIAFDVINRYFKYRGYDVTLVRNITNIDDKIIKRANENGESTTELVERNIKAMHDVFARLNILKPSKEPRATETIPEMVAMIETLIKKGYAYQGANGDVFYRVTKFADYGKLSKQNLEALQQGSRVDVVEEKENPMDFVLWKMAKEGEPAWDSPWGAGRPGWHIECSAMSKKLLGNTFDIHAGGSDLRFPHHENEIAQSEACNECTFANYWLHSGMVKVNAEKMSKSLNNFFTIVEVLEEYHPEVVRYFLASTVYRSEINYSKENLENAKASVERLFNALRDIEPIEVNLPDDASEYEEKFIKAMDNDFNTPEALAVLFSLAKEINTLKTTNKYKASGYAYLLRKLCDVLGILFTDIEEYFKQGDGADASEIEKLIAERTQAKKDKNYARADEIRNQLQQQGIILEDSATGTTWKKG</sequence>
<dbReference type="EC" id="6.1.1.16" evidence="1"/>
<dbReference type="EMBL" id="CP000915">
    <property type="protein sequence ID" value="ACD30332.1"/>
    <property type="molecule type" value="Genomic_DNA"/>
</dbReference>
<dbReference type="SMR" id="B2SFH9"/>
<dbReference type="KEGG" id="ftm:FTM_0266"/>
<dbReference type="HOGENOM" id="CLU_013528_0_1_6"/>
<dbReference type="GO" id="GO:0005829">
    <property type="term" value="C:cytosol"/>
    <property type="evidence" value="ECO:0007669"/>
    <property type="project" value="TreeGrafter"/>
</dbReference>
<dbReference type="GO" id="GO:0005524">
    <property type="term" value="F:ATP binding"/>
    <property type="evidence" value="ECO:0007669"/>
    <property type="project" value="UniProtKB-UniRule"/>
</dbReference>
<dbReference type="GO" id="GO:0004817">
    <property type="term" value="F:cysteine-tRNA ligase activity"/>
    <property type="evidence" value="ECO:0007669"/>
    <property type="project" value="UniProtKB-UniRule"/>
</dbReference>
<dbReference type="GO" id="GO:0008270">
    <property type="term" value="F:zinc ion binding"/>
    <property type="evidence" value="ECO:0007669"/>
    <property type="project" value="UniProtKB-UniRule"/>
</dbReference>
<dbReference type="GO" id="GO:0006423">
    <property type="term" value="P:cysteinyl-tRNA aminoacylation"/>
    <property type="evidence" value="ECO:0007669"/>
    <property type="project" value="UniProtKB-UniRule"/>
</dbReference>
<dbReference type="CDD" id="cd07963">
    <property type="entry name" value="Anticodon_Ia_Cys"/>
    <property type="match status" value="1"/>
</dbReference>
<dbReference type="CDD" id="cd00672">
    <property type="entry name" value="CysRS_core"/>
    <property type="match status" value="1"/>
</dbReference>
<dbReference type="FunFam" id="3.40.50.620:FF:000009">
    <property type="entry name" value="Cysteine--tRNA ligase"/>
    <property type="match status" value="1"/>
</dbReference>
<dbReference type="Gene3D" id="1.20.120.1910">
    <property type="entry name" value="Cysteine-tRNA ligase, C-terminal anti-codon recognition domain"/>
    <property type="match status" value="1"/>
</dbReference>
<dbReference type="Gene3D" id="3.40.50.620">
    <property type="entry name" value="HUPs"/>
    <property type="match status" value="1"/>
</dbReference>
<dbReference type="HAMAP" id="MF_00041">
    <property type="entry name" value="Cys_tRNA_synth"/>
    <property type="match status" value="1"/>
</dbReference>
<dbReference type="InterPro" id="IPR015803">
    <property type="entry name" value="Cys-tRNA-ligase"/>
</dbReference>
<dbReference type="InterPro" id="IPR015273">
    <property type="entry name" value="Cys-tRNA-synt_Ia_DALR"/>
</dbReference>
<dbReference type="InterPro" id="IPR024909">
    <property type="entry name" value="Cys-tRNA/MSH_ligase"/>
</dbReference>
<dbReference type="InterPro" id="IPR056411">
    <property type="entry name" value="CysS_C"/>
</dbReference>
<dbReference type="InterPro" id="IPR014729">
    <property type="entry name" value="Rossmann-like_a/b/a_fold"/>
</dbReference>
<dbReference type="InterPro" id="IPR032678">
    <property type="entry name" value="tRNA-synt_1_cat_dom"/>
</dbReference>
<dbReference type="InterPro" id="IPR009080">
    <property type="entry name" value="tRNAsynth_Ia_anticodon-bd"/>
</dbReference>
<dbReference type="NCBIfam" id="TIGR00435">
    <property type="entry name" value="cysS"/>
    <property type="match status" value="1"/>
</dbReference>
<dbReference type="PANTHER" id="PTHR10890:SF3">
    <property type="entry name" value="CYSTEINE--TRNA LIGASE, CYTOPLASMIC"/>
    <property type="match status" value="1"/>
</dbReference>
<dbReference type="PANTHER" id="PTHR10890">
    <property type="entry name" value="CYSTEINYL-TRNA SYNTHETASE"/>
    <property type="match status" value="1"/>
</dbReference>
<dbReference type="Pfam" id="PF23493">
    <property type="entry name" value="CysS_C"/>
    <property type="match status" value="1"/>
</dbReference>
<dbReference type="Pfam" id="PF09190">
    <property type="entry name" value="DALR_2"/>
    <property type="match status" value="1"/>
</dbReference>
<dbReference type="Pfam" id="PF01406">
    <property type="entry name" value="tRNA-synt_1e"/>
    <property type="match status" value="1"/>
</dbReference>
<dbReference type="PRINTS" id="PR00983">
    <property type="entry name" value="TRNASYNTHCYS"/>
</dbReference>
<dbReference type="SMART" id="SM00840">
    <property type="entry name" value="DALR_2"/>
    <property type="match status" value="1"/>
</dbReference>
<dbReference type="SUPFAM" id="SSF47323">
    <property type="entry name" value="Anticodon-binding domain of a subclass of class I aminoacyl-tRNA synthetases"/>
    <property type="match status" value="1"/>
</dbReference>
<dbReference type="SUPFAM" id="SSF52374">
    <property type="entry name" value="Nucleotidylyl transferase"/>
    <property type="match status" value="1"/>
</dbReference>